<gene>
    <name type="primary">SPATA46</name>
    <name type="ORF">QtsA-14887</name>
</gene>
<name>SPT46_MACFA</name>
<accession>Q4R7L6</accession>
<feature type="chain" id="PRO_0000279459" description="Spermatogenesis-associated protein 46">
    <location>
        <begin position="1"/>
        <end position="251"/>
    </location>
</feature>
<dbReference type="EMBL" id="AB168799">
    <property type="protein sequence ID" value="BAE00906.1"/>
    <property type="molecule type" value="mRNA"/>
</dbReference>
<dbReference type="RefSeq" id="XP_065399159.1">
    <property type="nucleotide sequence ID" value="XM_065543087.1"/>
</dbReference>
<dbReference type="STRING" id="9541.ENSMFAP00000043613"/>
<dbReference type="Ensembl" id="ENSMFAT00000017903.2">
    <property type="protein sequence ID" value="ENSMFAP00000043613.2"/>
    <property type="gene ID" value="ENSMFAG00000039214.2"/>
</dbReference>
<dbReference type="GeneID" id="123572809"/>
<dbReference type="GeneTree" id="ENSGT00390000007598"/>
<dbReference type="Proteomes" id="UP000233100">
    <property type="component" value="Chromosome 1"/>
</dbReference>
<dbReference type="Bgee" id="ENSMFAG00000039214">
    <property type="expression patterns" value="Expressed in multicellular organism and 2 other cell types or tissues"/>
</dbReference>
<dbReference type="GO" id="GO:0031965">
    <property type="term" value="C:nuclear membrane"/>
    <property type="evidence" value="ECO:0000250"/>
    <property type="project" value="UniProtKB"/>
</dbReference>
<dbReference type="GO" id="GO:0030154">
    <property type="term" value="P:cell differentiation"/>
    <property type="evidence" value="ECO:0007669"/>
    <property type="project" value="UniProtKB-KW"/>
</dbReference>
<dbReference type="GO" id="GO:0007342">
    <property type="term" value="P:fusion of sperm to egg plasma membrane involved in single fertilization"/>
    <property type="evidence" value="ECO:0000250"/>
    <property type="project" value="UniProtKB"/>
</dbReference>
<dbReference type="GO" id="GO:0007283">
    <property type="term" value="P:spermatogenesis"/>
    <property type="evidence" value="ECO:0000250"/>
    <property type="project" value="UniProtKB"/>
</dbReference>
<dbReference type="InterPro" id="IPR040879">
    <property type="entry name" value="Spt46-like"/>
</dbReference>
<dbReference type="PANTHER" id="PTHR33517">
    <property type="entry name" value="PROTEIN FAM170B-RELATED"/>
    <property type="match status" value="1"/>
</dbReference>
<dbReference type="PANTHER" id="PTHR33517:SF4">
    <property type="entry name" value="SPERMATOGENESIS-ASSOCIATED PROTEIN 46"/>
    <property type="match status" value="1"/>
</dbReference>
<dbReference type="Pfam" id="PF17734">
    <property type="entry name" value="Spt46"/>
    <property type="match status" value="1"/>
</dbReference>
<sequence>MENFSLLSISGPPISSSALSAFPDIMFSRATSLPDIAKTAVPTEASSPAQALPPQYQSITVRQGIQNTALSPDCSLGDTQHGEKLRRNCTIYRPWFSPYSYFVCADKESHPEAYDFPEVQQDEGKWDNCLSEDMAESICSSSSSAENTCPREATKKSRHGLDSITSQDILMASRWHPAQQNGYKCAACCRMYPTLDFLKSHIKRGFREGFSCKVYYRKLKALWSKEPKAWLGDRLSSGSCQAFNSPAEHLR</sequence>
<keyword id="KW-0221">Differentiation</keyword>
<keyword id="KW-0472">Membrane</keyword>
<keyword id="KW-0539">Nucleus</keyword>
<keyword id="KW-1185">Reference proteome</keyword>
<keyword id="KW-0744">Spermatogenesis</keyword>
<protein>
    <recommendedName>
        <fullName>Spermatogenesis-associated protein 46</fullName>
    </recommendedName>
</protein>
<reference key="1">
    <citation type="submission" date="2004-03" db="EMBL/GenBank/DDBJ databases">
        <title>DNA sequences of macaque genes expressed in brain or testis and its evolutionary implications.</title>
        <authorList>
            <consortium name="International consortium for macaque cDNA sequencing and analysis"/>
        </authorList>
    </citation>
    <scope>NUCLEOTIDE SEQUENCE [LARGE SCALE MRNA]</scope>
    <source>
        <tissue>Testis</tissue>
    </source>
</reference>
<evidence type="ECO:0000250" key="1">
    <source>
        <dbReference type="UniProtKB" id="Q4FZF2"/>
    </source>
</evidence>
<comment type="function">
    <text evidence="1">Plays a role in spermiogenesis and fertilization.</text>
</comment>
<comment type="subcellular location">
    <subcellularLocation>
        <location evidence="1">Nucleus membrane</location>
    </subcellularLocation>
    <text evidence="1">Located throughout the subacrosomal area.</text>
</comment>
<proteinExistence type="evidence at transcript level"/>
<organism>
    <name type="scientific">Macaca fascicularis</name>
    <name type="common">Crab-eating macaque</name>
    <name type="synonym">Cynomolgus monkey</name>
    <dbReference type="NCBI Taxonomy" id="9541"/>
    <lineage>
        <taxon>Eukaryota</taxon>
        <taxon>Metazoa</taxon>
        <taxon>Chordata</taxon>
        <taxon>Craniata</taxon>
        <taxon>Vertebrata</taxon>
        <taxon>Euteleostomi</taxon>
        <taxon>Mammalia</taxon>
        <taxon>Eutheria</taxon>
        <taxon>Euarchontoglires</taxon>
        <taxon>Primates</taxon>
        <taxon>Haplorrhini</taxon>
        <taxon>Catarrhini</taxon>
        <taxon>Cercopithecidae</taxon>
        <taxon>Cercopithecinae</taxon>
        <taxon>Macaca</taxon>
    </lineage>
</organism>